<reference key="1">
    <citation type="submission" date="2007-06" db="EMBL/GenBank/DDBJ databases">
        <title>Complete sequence of chromosome of Staphylococcus aureus subsp. aureus JH1.</title>
        <authorList>
            <consortium name="US DOE Joint Genome Institute"/>
            <person name="Copeland A."/>
            <person name="Lucas S."/>
            <person name="Lapidus A."/>
            <person name="Barry K."/>
            <person name="Detter J.C."/>
            <person name="Glavina del Rio T."/>
            <person name="Hammon N."/>
            <person name="Israni S."/>
            <person name="Dalin E."/>
            <person name="Tice H."/>
            <person name="Pitluck S."/>
            <person name="Chain P."/>
            <person name="Malfatti S."/>
            <person name="Shin M."/>
            <person name="Vergez L."/>
            <person name="Schmutz J."/>
            <person name="Larimer F."/>
            <person name="Land M."/>
            <person name="Hauser L."/>
            <person name="Kyrpides N."/>
            <person name="Ivanova N."/>
            <person name="Tomasz A."/>
            <person name="Richardson P."/>
        </authorList>
    </citation>
    <scope>NUCLEOTIDE SEQUENCE [LARGE SCALE GENOMIC DNA]</scope>
    <source>
        <strain>JH1</strain>
    </source>
</reference>
<accession>A6U0U3</accession>
<comment type="function">
    <text evidence="1">Catalyzes the formation of N(4)-acetylcytidine (ac(4)C) at the wobble position of elongator tRNA(Met), using acetate and ATP as substrates. First activates an acetate ion to form acetyladenylate (Ac-AMP) and then transfers the acetyl group to tRNA to form ac(4)C34.</text>
</comment>
<comment type="catalytic activity">
    <reaction evidence="1">
        <text>cytidine(34) in elongator tRNA(Met) + acetate + ATP = N(4)-acetylcytidine(34) in elongator tRNA(Met) + AMP + diphosphate</text>
        <dbReference type="Rhea" id="RHEA:58144"/>
        <dbReference type="Rhea" id="RHEA-COMP:10693"/>
        <dbReference type="Rhea" id="RHEA-COMP:10694"/>
        <dbReference type="ChEBI" id="CHEBI:30089"/>
        <dbReference type="ChEBI" id="CHEBI:30616"/>
        <dbReference type="ChEBI" id="CHEBI:33019"/>
        <dbReference type="ChEBI" id="CHEBI:74900"/>
        <dbReference type="ChEBI" id="CHEBI:82748"/>
        <dbReference type="ChEBI" id="CHEBI:456215"/>
    </reaction>
</comment>
<comment type="subcellular location">
    <subcellularLocation>
        <location evidence="1">Cytoplasm</location>
    </subcellularLocation>
</comment>
<comment type="similarity">
    <text evidence="1">Belongs to the TmcAL family.</text>
</comment>
<organism>
    <name type="scientific">Staphylococcus aureus (strain JH1)</name>
    <dbReference type="NCBI Taxonomy" id="359787"/>
    <lineage>
        <taxon>Bacteria</taxon>
        <taxon>Bacillati</taxon>
        <taxon>Bacillota</taxon>
        <taxon>Bacilli</taxon>
        <taxon>Bacillales</taxon>
        <taxon>Staphylococcaceae</taxon>
        <taxon>Staphylococcus</taxon>
    </lineage>
</organism>
<sequence>MKSVGLITEYNPFHNGHQYHINQSKKLTNADVTIAIMSGNFVMRGEPAIYNKFTRAKMALSTADLVIELPATASLSSGDHFAELAVKVADYMSVDTIAFGSENNDIKTLKQLAHSINEIEQSESFSQKVKEGKSYPRIISELLEHHEALASPNNILGISYLKAIAKNAKNINAISIKRENAQHHDSLIQHHQFASGTSIRTSIISQDDHWHHVVPKDIQHLYVTPHITLNQIFPYLKYQIIAMTTDSLKNIYTVTEGFENRLKSNIYEATDFHHFVKLLKTKRYTYTHIQRLLMNVLLNIKPTDVTSNIHAVKVLAMNDRGRQYLKHLKTAFPERQYITNINKSNAHYFTNEIKATHIYNAISGQQQTDFNTPVIQQYR</sequence>
<keyword id="KW-0067">ATP-binding</keyword>
<keyword id="KW-0963">Cytoplasm</keyword>
<keyword id="KW-0436">Ligase</keyword>
<keyword id="KW-0547">Nucleotide-binding</keyword>
<keyword id="KW-0694">RNA-binding</keyword>
<keyword id="KW-0819">tRNA processing</keyword>
<keyword id="KW-0820">tRNA-binding</keyword>
<proteinExistence type="inferred from homology"/>
<protein>
    <recommendedName>
        <fullName evidence="1">tRNA(Met) cytidine acetate ligase</fullName>
        <ecNumber evidence="1">6.3.4.-</ecNumber>
    </recommendedName>
</protein>
<name>TMCAL_STAA2</name>
<dbReference type="EC" id="6.3.4.-" evidence="1"/>
<dbReference type="EMBL" id="CP000736">
    <property type="protein sequence ID" value="ABR52061.1"/>
    <property type="molecule type" value="Genomic_DNA"/>
</dbReference>
<dbReference type="SMR" id="A6U0U3"/>
<dbReference type="KEGG" id="sah:SaurJH1_1207"/>
<dbReference type="HOGENOM" id="CLU_038915_0_2_9"/>
<dbReference type="GO" id="GO:0005737">
    <property type="term" value="C:cytoplasm"/>
    <property type="evidence" value="ECO:0007669"/>
    <property type="project" value="UniProtKB-SubCell"/>
</dbReference>
<dbReference type="GO" id="GO:0005524">
    <property type="term" value="F:ATP binding"/>
    <property type="evidence" value="ECO:0007669"/>
    <property type="project" value="UniProtKB-KW"/>
</dbReference>
<dbReference type="GO" id="GO:0016879">
    <property type="term" value="F:ligase activity, forming carbon-nitrogen bonds"/>
    <property type="evidence" value="ECO:0007669"/>
    <property type="project" value="UniProtKB-UniRule"/>
</dbReference>
<dbReference type="GO" id="GO:0000049">
    <property type="term" value="F:tRNA binding"/>
    <property type="evidence" value="ECO:0007669"/>
    <property type="project" value="UniProtKB-KW"/>
</dbReference>
<dbReference type="GO" id="GO:0006400">
    <property type="term" value="P:tRNA modification"/>
    <property type="evidence" value="ECO:0007669"/>
    <property type="project" value="UniProtKB-UniRule"/>
</dbReference>
<dbReference type="Gene3D" id="3.40.50.620">
    <property type="entry name" value="HUPs"/>
    <property type="match status" value="1"/>
</dbReference>
<dbReference type="HAMAP" id="MF_01539">
    <property type="entry name" value="TmcAL"/>
    <property type="match status" value="1"/>
</dbReference>
<dbReference type="InterPro" id="IPR014729">
    <property type="entry name" value="Rossmann-like_a/b/a_fold"/>
</dbReference>
<dbReference type="InterPro" id="IPR008513">
    <property type="entry name" value="tRNA(Met)_cyd_acetate_ligase"/>
</dbReference>
<dbReference type="NCBIfam" id="NF010191">
    <property type="entry name" value="PRK13670.1"/>
    <property type="match status" value="1"/>
</dbReference>
<dbReference type="PANTHER" id="PTHR37825">
    <property type="entry name" value="TRNA(MET) CYTIDINE ACETATE LIGASE"/>
    <property type="match status" value="1"/>
</dbReference>
<dbReference type="PANTHER" id="PTHR37825:SF1">
    <property type="entry name" value="TRNA(MET) CYTIDINE ACETATE LIGASE"/>
    <property type="match status" value="1"/>
</dbReference>
<dbReference type="Pfam" id="PF05636">
    <property type="entry name" value="HIGH_NTase1"/>
    <property type="match status" value="1"/>
</dbReference>
<dbReference type="SUPFAM" id="SSF52374">
    <property type="entry name" value="Nucleotidylyl transferase"/>
    <property type="match status" value="1"/>
</dbReference>
<feature type="chain" id="PRO_1000087622" description="tRNA(Met) cytidine acetate ligase">
    <location>
        <begin position="1"/>
        <end position="379"/>
    </location>
</feature>
<feature type="binding site" evidence="1">
    <location>
        <begin position="7"/>
        <end position="20"/>
    </location>
    <ligand>
        <name>ATP</name>
        <dbReference type="ChEBI" id="CHEBI:30616"/>
    </ligand>
</feature>
<feature type="binding site" evidence="1">
    <location>
        <position position="100"/>
    </location>
    <ligand>
        <name>ATP</name>
        <dbReference type="ChEBI" id="CHEBI:30616"/>
    </ligand>
</feature>
<feature type="binding site" evidence="1">
    <location>
        <position position="153"/>
    </location>
    <ligand>
        <name>ATP</name>
        <dbReference type="ChEBI" id="CHEBI:30616"/>
    </ligand>
</feature>
<feature type="binding site" evidence="1">
    <location>
        <position position="178"/>
    </location>
    <ligand>
        <name>ATP</name>
        <dbReference type="ChEBI" id="CHEBI:30616"/>
    </ligand>
</feature>
<gene>
    <name evidence="1" type="primary">tmcAL</name>
    <name type="ordered locus">SaurJH1_1207</name>
</gene>
<evidence type="ECO:0000255" key="1">
    <source>
        <dbReference type="HAMAP-Rule" id="MF_01539"/>
    </source>
</evidence>